<dbReference type="EC" id="2.1.2.10" evidence="1"/>
<dbReference type="EMBL" id="CP000803">
    <property type="protein sequence ID" value="ABU60979.1"/>
    <property type="molecule type" value="Genomic_DNA"/>
</dbReference>
<dbReference type="RefSeq" id="WP_004336875.1">
    <property type="nucleotide sequence ID" value="NC_009749.1"/>
</dbReference>
<dbReference type="SMR" id="A7NAH6"/>
<dbReference type="KEGG" id="fta:FTA_0503"/>
<dbReference type="HOGENOM" id="CLU_007884_10_2_6"/>
<dbReference type="GO" id="GO:0005829">
    <property type="term" value="C:cytosol"/>
    <property type="evidence" value="ECO:0007669"/>
    <property type="project" value="TreeGrafter"/>
</dbReference>
<dbReference type="GO" id="GO:0005960">
    <property type="term" value="C:glycine cleavage complex"/>
    <property type="evidence" value="ECO:0007669"/>
    <property type="project" value="InterPro"/>
</dbReference>
<dbReference type="GO" id="GO:0004047">
    <property type="term" value="F:aminomethyltransferase activity"/>
    <property type="evidence" value="ECO:0007669"/>
    <property type="project" value="UniProtKB-UniRule"/>
</dbReference>
<dbReference type="GO" id="GO:0008483">
    <property type="term" value="F:transaminase activity"/>
    <property type="evidence" value="ECO:0007669"/>
    <property type="project" value="UniProtKB-KW"/>
</dbReference>
<dbReference type="GO" id="GO:0019464">
    <property type="term" value="P:glycine decarboxylation via glycine cleavage system"/>
    <property type="evidence" value="ECO:0007669"/>
    <property type="project" value="UniProtKB-UniRule"/>
</dbReference>
<dbReference type="FunFam" id="3.30.70.1400:FF:000001">
    <property type="entry name" value="Aminomethyltransferase"/>
    <property type="match status" value="1"/>
</dbReference>
<dbReference type="FunFam" id="4.10.1250.10:FF:000001">
    <property type="entry name" value="Aminomethyltransferase"/>
    <property type="match status" value="1"/>
</dbReference>
<dbReference type="Gene3D" id="2.40.30.110">
    <property type="entry name" value="Aminomethyltransferase beta-barrel domains"/>
    <property type="match status" value="1"/>
</dbReference>
<dbReference type="Gene3D" id="3.30.70.1400">
    <property type="entry name" value="Aminomethyltransferase beta-barrel domains"/>
    <property type="match status" value="1"/>
</dbReference>
<dbReference type="Gene3D" id="4.10.1250.10">
    <property type="entry name" value="Aminomethyltransferase fragment"/>
    <property type="match status" value="1"/>
</dbReference>
<dbReference type="Gene3D" id="3.30.1360.120">
    <property type="entry name" value="Probable tRNA modification gtpase trme, domain 1"/>
    <property type="match status" value="1"/>
</dbReference>
<dbReference type="HAMAP" id="MF_00259">
    <property type="entry name" value="GcvT"/>
    <property type="match status" value="1"/>
</dbReference>
<dbReference type="InterPro" id="IPR006223">
    <property type="entry name" value="GCS_T"/>
</dbReference>
<dbReference type="InterPro" id="IPR022903">
    <property type="entry name" value="GCS_T_bac"/>
</dbReference>
<dbReference type="InterPro" id="IPR013977">
    <property type="entry name" value="GCST_C"/>
</dbReference>
<dbReference type="InterPro" id="IPR006222">
    <property type="entry name" value="GCV_T_N"/>
</dbReference>
<dbReference type="InterPro" id="IPR028896">
    <property type="entry name" value="GcvT/YgfZ/DmdA"/>
</dbReference>
<dbReference type="InterPro" id="IPR029043">
    <property type="entry name" value="GcvT/YgfZ_C"/>
</dbReference>
<dbReference type="InterPro" id="IPR027266">
    <property type="entry name" value="TrmE/GcvT_dom1"/>
</dbReference>
<dbReference type="NCBIfam" id="TIGR00528">
    <property type="entry name" value="gcvT"/>
    <property type="match status" value="1"/>
</dbReference>
<dbReference type="NCBIfam" id="NF001567">
    <property type="entry name" value="PRK00389.1"/>
    <property type="match status" value="1"/>
</dbReference>
<dbReference type="PANTHER" id="PTHR43757">
    <property type="entry name" value="AMINOMETHYLTRANSFERASE"/>
    <property type="match status" value="1"/>
</dbReference>
<dbReference type="PANTHER" id="PTHR43757:SF2">
    <property type="entry name" value="AMINOMETHYLTRANSFERASE, MITOCHONDRIAL"/>
    <property type="match status" value="1"/>
</dbReference>
<dbReference type="Pfam" id="PF01571">
    <property type="entry name" value="GCV_T"/>
    <property type="match status" value="1"/>
</dbReference>
<dbReference type="Pfam" id="PF08669">
    <property type="entry name" value="GCV_T_C"/>
    <property type="match status" value="1"/>
</dbReference>
<dbReference type="PIRSF" id="PIRSF006487">
    <property type="entry name" value="GcvT"/>
    <property type="match status" value="1"/>
</dbReference>
<dbReference type="SUPFAM" id="SSF101790">
    <property type="entry name" value="Aminomethyltransferase beta-barrel domain"/>
    <property type="match status" value="1"/>
</dbReference>
<dbReference type="SUPFAM" id="SSF103025">
    <property type="entry name" value="Folate-binding domain"/>
    <property type="match status" value="1"/>
</dbReference>
<keyword id="KW-0032">Aminotransferase</keyword>
<keyword id="KW-0808">Transferase</keyword>
<name>GCST_FRATF</name>
<protein>
    <recommendedName>
        <fullName evidence="1">Aminomethyltransferase</fullName>
        <ecNumber evidence="1">2.1.2.10</ecNumber>
    </recommendedName>
    <alternativeName>
        <fullName evidence="1">Glycine cleavage system T protein</fullName>
    </alternativeName>
</protein>
<organism>
    <name type="scientific">Francisella tularensis subsp. holarctica (strain FTNF002-00 / FTA)</name>
    <dbReference type="NCBI Taxonomy" id="458234"/>
    <lineage>
        <taxon>Bacteria</taxon>
        <taxon>Pseudomonadati</taxon>
        <taxon>Pseudomonadota</taxon>
        <taxon>Gammaproteobacteria</taxon>
        <taxon>Thiotrichales</taxon>
        <taxon>Francisellaceae</taxon>
        <taxon>Francisella</taxon>
    </lineage>
</organism>
<sequence length="358" mass="39516">MLKTPLYESHIAANAKMIDFSGWSMPINYGSQIQEHNNVREDCGIFDVSHMLAVDIQGSEAEKFLRYLLANDVAKLQENKAQYGCMLNHDAGIVDDLITYKVTDEHFRIVVNAGNRESDVAWFNQNAQNFDVAITPQTDLAIVAVQGPKAVAVIKRVVTKEIAAEIEALLPFSFKFFSKWMVARTGYTGEDGFEVILPATQVKKFWDSLLENGAQPAGLGARDTLRLEAGMHLYGADMDTSTTPLERGLGWSVDLSDEHRDFIGKKAYLAKKAQGVDTKWVGVVLKTKGVLRAGQEIDFDNGEKGYITSGSFSPTLKVAIGLAYVPKQADNPVVNIRGKELEVELVKPKFVKNGKSLI</sequence>
<reference key="1">
    <citation type="journal article" date="2009" name="PLoS ONE">
        <title>Complete genome sequence of Francisella tularensis subspecies holarctica FTNF002-00.</title>
        <authorList>
            <person name="Barabote R.D."/>
            <person name="Xie G."/>
            <person name="Brettin T.S."/>
            <person name="Hinrichs S.H."/>
            <person name="Fey P.D."/>
            <person name="Jay J.J."/>
            <person name="Engle J.L."/>
            <person name="Godbole S.D."/>
            <person name="Noronha J.M."/>
            <person name="Scheuermann R.H."/>
            <person name="Zhou L.W."/>
            <person name="Lion C."/>
            <person name="Dempsey M.P."/>
        </authorList>
    </citation>
    <scope>NUCLEOTIDE SEQUENCE [LARGE SCALE GENOMIC DNA]</scope>
    <source>
        <strain>FTNF002-00 / FTA</strain>
    </source>
</reference>
<accession>A7NAH6</accession>
<feature type="chain" id="PRO_1000047667" description="Aminomethyltransferase">
    <location>
        <begin position="1"/>
        <end position="358"/>
    </location>
</feature>
<evidence type="ECO:0000255" key="1">
    <source>
        <dbReference type="HAMAP-Rule" id="MF_00259"/>
    </source>
</evidence>
<proteinExistence type="inferred from homology"/>
<comment type="function">
    <text evidence="1">The glycine cleavage system catalyzes the degradation of glycine.</text>
</comment>
<comment type="catalytic activity">
    <reaction evidence="1">
        <text>N(6)-[(R)-S(8)-aminomethyldihydrolipoyl]-L-lysyl-[protein] + (6S)-5,6,7,8-tetrahydrofolate = N(6)-[(R)-dihydrolipoyl]-L-lysyl-[protein] + (6R)-5,10-methylene-5,6,7,8-tetrahydrofolate + NH4(+)</text>
        <dbReference type="Rhea" id="RHEA:16945"/>
        <dbReference type="Rhea" id="RHEA-COMP:10475"/>
        <dbReference type="Rhea" id="RHEA-COMP:10492"/>
        <dbReference type="ChEBI" id="CHEBI:15636"/>
        <dbReference type="ChEBI" id="CHEBI:28938"/>
        <dbReference type="ChEBI" id="CHEBI:57453"/>
        <dbReference type="ChEBI" id="CHEBI:83100"/>
        <dbReference type="ChEBI" id="CHEBI:83143"/>
        <dbReference type="EC" id="2.1.2.10"/>
    </reaction>
</comment>
<comment type="subunit">
    <text evidence="1">The glycine cleavage system is composed of four proteins: P, T, L and H.</text>
</comment>
<comment type="similarity">
    <text evidence="1">Belongs to the GcvT family.</text>
</comment>
<gene>
    <name evidence="1" type="primary">gcvT</name>
    <name type="ordered locus">FTA_0503</name>
</gene>